<proteinExistence type="inferred from homology"/>
<protein>
    <recommendedName>
        <fullName evidence="1">Probable 2-(5''-triphosphoribosyl)-3'-dephosphocoenzyme-A synthase</fullName>
        <shortName evidence="1">2-(5''-triphosphoribosyl)-3'-dephospho-CoA synthase</shortName>
        <ecNumber evidence="1">2.4.2.52</ecNumber>
    </recommendedName>
</protein>
<gene>
    <name evidence="1" type="primary">citG</name>
    <name type="ordered locus">Sez_0986</name>
</gene>
<name>CITG_STREM</name>
<feature type="chain" id="PRO_1000189595" description="Probable 2-(5''-triphosphoribosyl)-3'-dephosphocoenzyme-A synthase">
    <location>
        <begin position="1"/>
        <end position="294"/>
    </location>
</feature>
<sequence>MTKKVFDDISRLALKALLYEVSLSPKPGLVDQLDNGAHDDMSFLTFVDSALALAPFFKTYLDIGFYHAKEDPGLIFERLRVSGIEAEQAMFSATKGVNTHKGVNFSLALLLGATGMYLASQPQLLAHVTAFTEEDSLAICQLVKPLTAHLLETDFGSLDLKKELTYGEKLFLDYGIKGPRGEASEGYPTIAHKALPFLRKSLRSTDQETAQLQLLVYLMSIVEDGNLIHRGGIKAWQRVKQDMRLLHNSALSATDLKAALSAYNDKLIQQHLSPGGTADLLVLSLYFAFLENQL</sequence>
<organism>
    <name type="scientific">Streptococcus equi subsp. zooepidemicus (strain MGCS10565)</name>
    <dbReference type="NCBI Taxonomy" id="552526"/>
    <lineage>
        <taxon>Bacteria</taxon>
        <taxon>Bacillati</taxon>
        <taxon>Bacillota</taxon>
        <taxon>Bacilli</taxon>
        <taxon>Lactobacillales</taxon>
        <taxon>Streptococcaceae</taxon>
        <taxon>Streptococcus</taxon>
    </lineage>
</organism>
<comment type="catalytic activity">
    <reaction evidence="1">
        <text>3'-dephospho-CoA + ATP = 2'-(5''-triphospho-alpha-D-ribosyl)-3'-dephospho-CoA + adenine</text>
        <dbReference type="Rhea" id="RHEA:15117"/>
        <dbReference type="ChEBI" id="CHEBI:16708"/>
        <dbReference type="ChEBI" id="CHEBI:30616"/>
        <dbReference type="ChEBI" id="CHEBI:57328"/>
        <dbReference type="ChEBI" id="CHEBI:61378"/>
        <dbReference type="EC" id="2.4.2.52"/>
    </reaction>
</comment>
<comment type="similarity">
    <text evidence="1">Belongs to the CitG/MdcB family.</text>
</comment>
<keyword id="KW-0067">ATP-binding</keyword>
<keyword id="KW-0547">Nucleotide-binding</keyword>
<keyword id="KW-0808">Transferase</keyword>
<evidence type="ECO:0000255" key="1">
    <source>
        <dbReference type="HAMAP-Rule" id="MF_00397"/>
    </source>
</evidence>
<reference key="1">
    <citation type="journal article" date="2008" name="PLoS ONE">
        <title>Genome sequence of a lancefield group C Streptococcus zooepidemicus strain causing epidemic nephritis: new information about an old disease.</title>
        <authorList>
            <person name="Beres S.B."/>
            <person name="Sesso R."/>
            <person name="Pinto S.W.L."/>
            <person name="Hoe N.P."/>
            <person name="Porcella S.F."/>
            <person name="Deleo F.R."/>
            <person name="Musser J.M."/>
        </authorList>
    </citation>
    <scope>NUCLEOTIDE SEQUENCE [LARGE SCALE GENOMIC DNA]</scope>
    <source>
        <strain>MGCS10565</strain>
    </source>
</reference>
<accession>B4U2X5</accession>
<dbReference type="EC" id="2.4.2.52" evidence="1"/>
<dbReference type="EMBL" id="CP001129">
    <property type="protein sequence ID" value="ACG62342.1"/>
    <property type="molecule type" value="Genomic_DNA"/>
</dbReference>
<dbReference type="RefSeq" id="WP_012515610.1">
    <property type="nucleotide sequence ID" value="NC_011134.1"/>
</dbReference>
<dbReference type="KEGG" id="sez:Sez_0986"/>
<dbReference type="HOGENOM" id="CLU_056179_1_0_9"/>
<dbReference type="Proteomes" id="UP000001873">
    <property type="component" value="Chromosome"/>
</dbReference>
<dbReference type="GO" id="GO:0005524">
    <property type="term" value="F:ATP binding"/>
    <property type="evidence" value="ECO:0007669"/>
    <property type="project" value="UniProtKB-KW"/>
</dbReference>
<dbReference type="GO" id="GO:0046917">
    <property type="term" value="F:triphosphoribosyl-dephospho-CoA synthase activity"/>
    <property type="evidence" value="ECO:0007669"/>
    <property type="project" value="UniProtKB-UniRule"/>
</dbReference>
<dbReference type="GO" id="GO:0051191">
    <property type="term" value="P:prosthetic group biosynthetic process"/>
    <property type="evidence" value="ECO:0007669"/>
    <property type="project" value="TreeGrafter"/>
</dbReference>
<dbReference type="Gene3D" id="1.10.4200.10">
    <property type="entry name" value="Triphosphoribosyl-dephospho-CoA protein"/>
    <property type="match status" value="1"/>
</dbReference>
<dbReference type="HAMAP" id="MF_00397">
    <property type="entry name" value="CitG"/>
    <property type="match status" value="1"/>
</dbReference>
<dbReference type="InterPro" id="IPR002736">
    <property type="entry name" value="CitG"/>
</dbReference>
<dbReference type="InterPro" id="IPR017551">
    <property type="entry name" value="TriPribosyl-deP-CoA_syn_CitG"/>
</dbReference>
<dbReference type="NCBIfam" id="TIGR03125">
    <property type="entry name" value="citrate_citG"/>
    <property type="match status" value="1"/>
</dbReference>
<dbReference type="PANTHER" id="PTHR30201:SF2">
    <property type="entry name" value="2-(5''-TRIPHOSPHORIBOSYL)-3'-DEPHOSPHOCOENZYME-A SYNTHASE"/>
    <property type="match status" value="1"/>
</dbReference>
<dbReference type="PANTHER" id="PTHR30201">
    <property type="entry name" value="TRIPHOSPHORIBOSYL-DEPHOSPHO-COA SYNTHASE"/>
    <property type="match status" value="1"/>
</dbReference>
<dbReference type="Pfam" id="PF01874">
    <property type="entry name" value="CitG"/>
    <property type="match status" value="1"/>
</dbReference>